<gene>
    <name evidence="1" type="primary">rplK</name>
    <name type="ordered locus">Helmi_13170</name>
    <name type="ORF">HM1_1365</name>
</gene>
<organism>
    <name type="scientific">Heliobacterium modesticaldum (strain ATCC 51547 / Ice1)</name>
    <dbReference type="NCBI Taxonomy" id="498761"/>
    <lineage>
        <taxon>Bacteria</taxon>
        <taxon>Bacillati</taxon>
        <taxon>Bacillota</taxon>
        <taxon>Clostridia</taxon>
        <taxon>Eubacteriales</taxon>
        <taxon>Heliobacteriaceae</taxon>
        <taxon>Heliomicrobium</taxon>
    </lineage>
</organism>
<sequence length="140" mass="14720">MAKKVVAVVKLQCPAGKANPAPPVGPALGQHGVNIMAFCKQYNEATAAQAGLIIPVEITVYEDRSFTFVTKTPPAAVLLKKAAGIETASGTPNKKKVGKVSRAKVQEIAEMKMKDLNAASIEAAMRMIEGTARSMGIEIV</sequence>
<proteinExistence type="inferred from homology"/>
<keyword id="KW-0488">Methylation</keyword>
<keyword id="KW-1185">Reference proteome</keyword>
<keyword id="KW-0687">Ribonucleoprotein</keyword>
<keyword id="KW-0689">Ribosomal protein</keyword>
<keyword id="KW-0694">RNA-binding</keyword>
<keyword id="KW-0699">rRNA-binding</keyword>
<protein>
    <recommendedName>
        <fullName evidence="1">Large ribosomal subunit protein uL11</fullName>
    </recommendedName>
    <alternativeName>
        <fullName evidence="2">50S ribosomal protein L11</fullName>
    </alternativeName>
</protein>
<accession>B0TC43</accession>
<comment type="function">
    <text evidence="1">Forms part of the ribosomal stalk which helps the ribosome interact with GTP-bound translation factors.</text>
</comment>
<comment type="subunit">
    <text evidence="1">Part of the ribosomal stalk of the 50S ribosomal subunit. Interacts with L10 and the large rRNA to form the base of the stalk. L10 forms an elongated spine to which L12 dimers bind in a sequential fashion forming a multimeric L10(L12)X complex.</text>
</comment>
<comment type="PTM">
    <text evidence="1">One or more lysine residues are methylated.</text>
</comment>
<comment type="similarity">
    <text evidence="1">Belongs to the universal ribosomal protein uL11 family.</text>
</comment>
<reference key="1">
    <citation type="journal article" date="2008" name="J. Bacteriol.">
        <title>The genome of Heliobacterium modesticaldum, a phototrophic representative of the Firmicutes containing the simplest photosynthetic apparatus.</title>
        <authorList>
            <person name="Sattley W.M."/>
            <person name="Madigan M.T."/>
            <person name="Swingley W.D."/>
            <person name="Cheung P.C."/>
            <person name="Clocksin K.M."/>
            <person name="Conrad A.L."/>
            <person name="Dejesa L.C."/>
            <person name="Honchak B.M."/>
            <person name="Jung D.O."/>
            <person name="Karbach L.E."/>
            <person name="Kurdoglu A."/>
            <person name="Lahiri S."/>
            <person name="Mastrian S.D."/>
            <person name="Page L.E."/>
            <person name="Taylor H.L."/>
            <person name="Wang Z.T."/>
            <person name="Raymond J."/>
            <person name="Chen M."/>
            <person name="Blankenship R.E."/>
            <person name="Touchman J.W."/>
        </authorList>
    </citation>
    <scope>NUCLEOTIDE SEQUENCE [LARGE SCALE GENOMIC DNA]</scope>
    <source>
        <strain>ATCC 51547 / Ice1</strain>
    </source>
</reference>
<evidence type="ECO:0000255" key="1">
    <source>
        <dbReference type="HAMAP-Rule" id="MF_00736"/>
    </source>
</evidence>
<evidence type="ECO:0000305" key="2"/>
<feature type="chain" id="PRO_1000195651" description="Large ribosomal subunit protein uL11">
    <location>
        <begin position="1"/>
        <end position="140"/>
    </location>
</feature>
<name>RL11_HELMI</name>
<dbReference type="EMBL" id="CP000930">
    <property type="protein sequence ID" value="ABZ83942.1"/>
    <property type="molecule type" value="Genomic_DNA"/>
</dbReference>
<dbReference type="RefSeq" id="WP_012282458.1">
    <property type="nucleotide sequence ID" value="NC_010337.2"/>
</dbReference>
<dbReference type="SMR" id="B0TC43"/>
<dbReference type="STRING" id="498761.HM1_1365"/>
<dbReference type="KEGG" id="hmo:HM1_1365"/>
<dbReference type="eggNOG" id="COG0080">
    <property type="taxonomic scope" value="Bacteria"/>
</dbReference>
<dbReference type="HOGENOM" id="CLU_074237_2_1_9"/>
<dbReference type="OrthoDB" id="9802408at2"/>
<dbReference type="Proteomes" id="UP000008550">
    <property type="component" value="Chromosome"/>
</dbReference>
<dbReference type="GO" id="GO:0022625">
    <property type="term" value="C:cytosolic large ribosomal subunit"/>
    <property type="evidence" value="ECO:0007669"/>
    <property type="project" value="TreeGrafter"/>
</dbReference>
<dbReference type="GO" id="GO:0070180">
    <property type="term" value="F:large ribosomal subunit rRNA binding"/>
    <property type="evidence" value="ECO:0007669"/>
    <property type="project" value="UniProtKB-UniRule"/>
</dbReference>
<dbReference type="GO" id="GO:0003735">
    <property type="term" value="F:structural constituent of ribosome"/>
    <property type="evidence" value="ECO:0007669"/>
    <property type="project" value="InterPro"/>
</dbReference>
<dbReference type="GO" id="GO:0006412">
    <property type="term" value="P:translation"/>
    <property type="evidence" value="ECO:0007669"/>
    <property type="project" value="UniProtKB-UniRule"/>
</dbReference>
<dbReference type="CDD" id="cd00349">
    <property type="entry name" value="Ribosomal_L11"/>
    <property type="match status" value="1"/>
</dbReference>
<dbReference type="FunFam" id="1.10.10.250:FF:000001">
    <property type="entry name" value="50S ribosomal protein L11"/>
    <property type="match status" value="1"/>
</dbReference>
<dbReference type="FunFam" id="3.30.1550.10:FF:000001">
    <property type="entry name" value="50S ribosomal protein L11"/>
    <property type="match status" value="1"/>
</dbReference>
<dbReference type="Gene3D" id="1.10.10.250">
    <property type="entry name" value="Ribosomal protein L11, C-terminal domain"/>
    <property type="match status" value="1"/>
</dbReference>
<dbReference type="Gene3D" id="3.30.1550.10">
    <property type="entry name" value="Ribosomal protein L11/L12, N-terminal domain"/>
    <property type="match status" value="1"/>
</dbReference>
<dbReference type="HAMAP" id="MF_00736">
    <property type="entry name" value="Ribosomal_uL11"/>
    <property type="match status" value="1"/>
</dbReference>
<dbReference type="InterPro" id="IPR000911">
    <property type="entry name" value="Ribosomal_uL11"/>
</dbReference>
<dbReference type="InterPro" id="IPR006519">
    <property type="entry name" value="Ribosomal_uL11_bac-typ"/>
</dbReference>
<dbReference type="InterPro" id="IPR020783">
    <property type="entry name" value="Ribosomal_uL11_C"/>
</dbReference>
<dbReference type="InterPro" id="IPR036769">
    <property type="entry name" value="Ribosomal_uL11_C_sf"/>
</dbReference>
<dbReference type="InterPro" id="IPR020784">
    <property type="entry name" value="Ribosomal_uL11_N"/>
</dbReference>
<dbReference type="InterPro" id="IPR036796">
    <property type="entry name" value="Ribosomal_uL11_N_sf"/>
</dbReference>
<dbReference type="NCBIfam" id="TIGR01632">
    <property type="entry name" value="L11_bact"/>
    <property type="match status" value="1"/>
</dbReference>
<dbReference type="PANTHER" id="PTHR11661">
    <property type="entry name" value="60S RIBOSOMAL PROTEIN L12"/>
    <property type="match status" value="1"/>
</dbReference>
<dbReference type="PANTHER" id="PTHR11661:SF1">
    <property type="entry name" value="LARGE RIBOSOMAL SUBUNIT PROTEIN UL11M"/>
    <property type="match status" value="1"/>
</dbReference>
<dbReference type="Pfam" id="PF00298">
    <property type="entry name" value="Ribosomal_L11"/>
    <property type="match status" value="1"/>
</dbReference>
<dbReference type="Pfam" id="PF03946">
    <property type="entry name" value="Ribosomal_L11_N"/>
    <property type="match status" value="1"/>
</dbReference>
<dbReference type="SMART" id="SM00649">
    <property type="entry name" value="RL11"/>
    <property type="match status" value="1"/>
</dbReference>
<dbReference type="SUPFAM" id="SSF54747">
    <property type="entry name" value="Ribosomal L11/L12e N-terminal domain"/>
    <property type="match status" value="1"/>
</dbReference>
<dbReference type="SUPFAM" id="SSF46906">
    <property type="entry name" value="Ribosomal protein L11, C-terminal domain"/>
    <property type="match status" value="1"/>
</dbReference>